<comment type="function">
    <text evidence="1">Forms part of the ribosomal stalk which helps the ribosome interact with GTP-bound translation factors.</text>
</comment>
<comment type="subunit">
    <text evidence="1">Part of the ribosomal stalk of the 50S ribosomal subunit. Interacts with L10 and the large rRNA to form the base of the stalk. L10 forms an elongated spine to which L12 dimers bind in a sequential fashion forming a multimeric L10(L12)X complex.</text>
</comment>
<comment type="PTM">
    <text evidence="1">One or more lysine residues are methylated.</text>
</comment>
<comment type="similarity">
    <text evidence="1">Belongs to the universal ribosomal protein uL11 family.</text>
</comment>
<organism>
    <name type="scientific">Mycolicibacterium gilvum (strain PYR-GCK)</name>
    <name type="common">Mycobacterium gilvum (strain PYR-GCK)</name>
    <dbReference type="NCBI Taxonomy" id="350054"/>
    <lineage>
        <taxon>Bacteria</taxon>
        <taxon>Bacillati</taxon>
        <taxon>Actinomycetota</taxon>
        <taxon>Actinomycetes</taxon>
        <taxon>Mycobacteriales</taxon>
        <taxon>Mycobacteriaceae</taxon>
        <taxon>Mycolicibacterium</taxon>
    </lineage>
</organism>
<dbReference type="EMBL" id="CP000656">
    <property type="protein sequence ID" value="ABP47582.1"/>
    <property type="molecule type" value="Genomic_DNA"/>
</dbReference>
<dbReference type="SMR" id="A4T1M2"/>
<dbReference type="STRING" id="350054.Mflv_5116"/>
<dbReference type="KEGG" id="mgi:Mflv_5116"/>
<dbReference type="eggNOG" id="COG0080">
    <property type="taxonomic scope" value="Bacteria"/>
</dbReference>
<dbReference type="HOGENOM" id="CLU_074237_2_1_11"/>
<dbReference type="OrthoDB" id="9802408at2"/>
<dbReference type="GO" id="GO:0022625">
    <property type="term" value="C:cytosolic large ribosomal subunit"/>
    <property type="evidence" value="ECO:0007669"/>
    <property type="project" value="TreeGrafter"/>
</dbReference>
<dbReference type="GO" id="GO:0070180">
    <property type="term" value="F:large ribosomal subunit rRNA binding"/>
    <property type="evidence" value="ECO:0007669"/>
    <property type="project" value="UniProtKB-UniRule"/>
</dbReference>
<dbReference type="GO" id="GO:0003735">
    <property type="term" value="F:structural constituent of ribosome"/>
    <property type="evidence" value="ECO:0007669"/>
    <property type="project" value="InterPro"/>
</dbReference>
<dbReference type="GO" id="GO:0006412">
    <property type="term" value="P:translation"/>
    <property type="evidence" value="ECO:0007669"/>
    <property type="project" value="UniProtKB-UniRule"/>
</dbReference>
<dbReference type="CDD" id="cd00349">
    <property type="entry name" value="Ribosomal_L11"/>
    <property type="match status" value="1"/>
</dbReference>
<dbReference type="FunFam" id="1.10.10.250:FF:000001">
    <property type="entry name" value="50S ribosomal protein L11"/>
    <property type="match status" value="1"/>
</dbReference>
<dbReference type="FunFam" id="3.30.1550.10:FF:000001">
    <property type="entry name" value="50S ribosomal protein L11"/>
    <property type="match status" value="1"/>
</dbReference>
<dbReference type="Gene3D" id="1.10.10.250">
    <property type="entry name" value="Ribosomal protein L11, C-terminal domain"/>
    <property type="match status" value="1"/>
</dbReference>
<dbReference type="Gene3D" id="3.30.1550.10">
    <property type="entry name" value="Ribosomal protein L11/L12, N-terminal domain"/>
    <property type="match status" value="1"/>
</dbReference>
<dbReference type="HAMAP" id="MF_00736">
    <property type="entry name" value="Ribosomal_uL11"/>
    <property type="match status" value="1"/>
</dbReference>
<dbReference type="InterPro" id="IPR000911">
    <property type="entry name" value="Ribosomal_uL11"/>
</dbReference>
<dbReference type="InterPro" id="IPR006519">
    <property type="entry name" value="Ribosomal_uL11_bac-typ"/>
</dbReference>
<dbReference type="InterPro" id="IPR020783">
    <property type="entry name" value="Ribosomal_uL11_C"/>
</dbReference>
<dbReference type="InterPro" id="IPR036769">
    <property type="entry name" value="Ribosomal_uL11_C_sf"/>
</dbReference>
<dbReference type="InterPro" id="IPR020785">
    <property type="entry name" value="Ribosomal_uL11_CS"/>
</dbReference>
<dbReference type="InterPro" id="IPR020784">
    <property type="entry name" value="Ribosomal_uL11_N"/>
</dbReference>
<dbReference type="InterPro" id="IPR036796">
    <property type="entry name" value="Ribosomal_uL11_N_sf"/>
</dbReference>
<dbReference type="NCBIfam" id="TIGR01632">
    <property type="entry name" value="L11_bact"/>
    <property type="match status" value="1"/>
</dbReference>
<dbReference type="PANTHER" id="PTHR11661">
    <property type="entry name" value="60S RIBOSOMAL PROTEIN L12"/>
    <property type="match status" value="1"/>
</dbReference>
<dbReference type="PANTHER" id="PTHR11661:SF1">
    <property type="entry name" value="LARGE RIBOSOMAL SUBUNIT PROTEIN UL11M"/>
    <property type="match status" value="1"/>
</dbReference>
<dbReference type="Pfam" id="PF00298">
    <property type="entry name" value="Ribosomal_L11"/>
    <property type="match status" value="1"/>
</dbReference>
<dbReference type="Pfam" id="PF03946">
    <property type="entry name" value="Ribosomal_L11_N"/>
    <property type="match status" value="1"/>
</dbReference>
<dbReference type="SMART" id="SM00649">
    <property type="entry name" value="RL11"/>
    <property type="match status" value="1"/>
</dbReference>
<dbReference type="SUPFAM" id="SSF54747">
    <property type="entry name" value="Ribosomal L11/L12e N-terminal domain"/>
    <property type="match status" value="1"/>
</dbReference>
<dbReference type="SUPFAM" id="SSF46906">
    <property type="entry name" value="Ribosomal protein L11, C-terminal domain"/>
    <property type="match status" value="1"/>
</dbReference>
<dbReference type="PROSITE" id="PS00359">
    <property type="entry name" value="RIBOSOMAL_L11"/>
    <property type="match status" value="1"/>
</dbReference>
<name>RL11_MYCGI</name>
<proteinExistence type="inferred from homology"/>
<feature type="chain" id="PRO_1000083391" description="Large ribosomal subunit protein uL11">
    <location>
        <begin position="1"/>
        <end position="142"/>
    </location>
</feature>
<keyword id="KW-0488">Methylation</keyword>
<keyword id="KW-0687">Ribonucleoprotein</keyword>
<keyword id="KW-0689">Ribosomal protein</keyword>
<keyword id="KW-0694">RNA-binding</keyword>
<keyword id="KW-0699">rRNA-binding</keyword>
<reference key="1">
    <citation type="submission" date="2007-04" db="EMBL/GenBank/DDBJ databases">
        <title>Complete sequence of chromosome of Mycobacterium gilvum PYR-GCK.</title>
        <authorList>
            <consortium name="US DOE Joint Genome Institute"/>
            <person name="Copeland A."/>
            <person name="Lucas S."/>
            <person name="Lapidus A."/>
            <person name="Barry K."/>
            <person name="Detter J.C."/>
            <person name="Glavina del Rio T."/>
            <person name="Hammon N."/>
            <person name="Israni S."/>
            <person name="Dalin E."/>
            <person name="Tice H."/>
            <person name="Pitluck S."/>
            <person name="Chain P."/>
            <person name="Malfatti S."/>
            <person name="Shin M."/>
            <person name="Vergez L."/>
            <person name="Schmutz J."/>
            <person name="Larimer F."/>
            <person name="Land M."/>
            <person name="Hauser L."/>
            <person name="Kyrpides N."/>
            <person name="Mikhailova N."/>
            <person name="Miller C."/>
            <person name="Richardson P."/>
        </authorList>
    </citation>
    <scope>NUCLEOTIDE SEQUENCE [LARGE SCALE GENOMIC DNA]</scope>
    <source>
        <strain>PYR-GCK</strain>
    </source>
</reference>
<gene>
    <name evidence="1" type="primary">rplK</name>
    <name type="ordered locus">Mflv_5116</name>
</gene>
<protein>
    <recommendedName>
        <fullName evidence="1">Large ribosomal subunit protein uL11</fullName>
    </recommendedName>
    <alternativeName>
        <fullName evidence="2">50S ribosomal protein L11</fullName>
    </alternativeName>
</protein>
<evidence type="ECO:0000255" key="1">
    <source>
        <dbReference type="HAMAP-Rule" id="MF_00736"/>
    </source>
</evidence>
<evidence type="ECO:0000305" key="2"/>
<accession>A4T1M2</accession>
<sequence length="142" mass="15143">MPPKKKVTGLIKLQIQAGQANPAPPVGPALGQHGVNIMEFCKAYNAATESQRGNVIPVEITVYEDRSFTFALKTPPAAKLLLKAAGVPKGSGEPHKTKVAKVTWDQVREIAETKKEDLNANDIDQAAKIIAGTARSMGITVE</sequence>